<comment type="function">
    <text evidence="1">Oligomerizes into helical capsid to encapsidate the viral genome, protecting it from nucleases and the cellular innate immune response. VP35 binds to and stabilizes monomeric NP, keeping it soluble. Upon virus replication, NP is recruited to bind cooperatively viral genomic RNA and VP35 is released. The encapsidated genomic RNA is termed the nucleocapsid and serves as template for transcription and replication. The nucleocapsid is helical with a pitch of 10.81 NP per turn and a diameter of about 22nm. Each NP binds to six nucleotides of viral genomic RNA, three being exposed to the solvant and three hidden into the nucleocapsid. Also recruits host PPP2R5C phosphatase to dephosphorylate VP30 and thereby promote viral transcription. Upon virion assembly and budding, NP binds to VP24 and possibly host STAU1.</text>
</comment>
<comment type="subunit">
    <text evidence="1">Homooligomer. Homomultimerizes to form the nucleocapsid. Binds to viral genomic RNA. Interacts with VP35 and VP30 to form the nucleocapsid. Interacts with host PPP2R5C; this interaction leads to VP30 dephosphorylation and viral transcription. Interacts with VP24; this interaction facilitates nucleocapsid assembly and genome packaging. Interacts with matrix protein VP40; this interaction allows recruitment of the nucleocapsid into progeny virions. Interacts with host STAU1. Interacts with host NXF1 (via RNA-binding domain); this interaction recruits NXF1 to the inclusion bodies were viral replication takes place, probably to export viral mRNA-NXF1 complexes from these sites. Interacts with host CCDC92; this interaction sequesters NP in the host cytoplasm. Interacts with host TRIM14.</text>
</comment>
<comment type="subcellular location">
    <subcellularLocation>
        <location evidence="1">Virion</location>
    </subcellularLocation>
    <subcellularLocation>
        <location evidence="1">Host cytoplasm</location>
    </subcellularLocation>
</comment>
<comment type="domain">
    <text evidence="1">Comprizes a N-terminal arm involved in oligomerization, a NP core region involved in RNA binding, a disordered region follwoed by a C-terminal tail involved in protein-protein interactions. During oligomerization, NP N-terminal arm binds to a neighbor NP thereby displacing VP35 bound to monomeric NP.</text>
</comment>
<comment type="PTM">
    <text evidence="1">Phosphorylated and O-glycosylated by host. Acetylated by host EP300 in vitro.</text>
</comment>
<comment type="similarity">
    <text evidence="5">Belongs to the filoviruses nucleoprotein family.</text>
</comment>
<dbReference type="EMBL" id="AB050936">
    <property type="protein sequence ID" value="BAB69003.1"/>
    <property type="molecule type" value="Genomic_RNA"/>
</dbReference>
<dbReference type="SMR" id="Q91DE1"/>
<dbReference type="Proteomes" id="UP000002322">
    <property type="component" value="Genome"/>
</dbReference>
<dbReference type="GO" id="GO:0019029">
    <property type="term" value="C:helical viral capsid"/>
    <property type="evidence" value="ECO:0007669"/>
    <property type="project" value="UniProtKB-KW"/>
</dbReference>
<dbReference type="GO" id="GO:0030430">
    <property type="term" value="C:host cell cytoplasm"/>
    <property type="evidence" value="ECO:0007669"/>
    <property type="project" value="UniProtKB-SubCell"/>
</dbReference>
<dbReference type="GO" id="GO:1990904">
    <property type="term" value="C:ribonucleoprotein complex"/>
    <property type="evidence" value="ECO:0007669"/>
    <property type="project" value="UniProtKB-KW"/>
</dbReference>
<dbReference type="GO" id="GO:0019013">
    <property type="term" value="C:viral nucleocapsid"/>
    <property type="evidence" value="ECO:0007669"/>
    <property type="project" value="UniProtKB-KW"/>
</dbReference>
<dbReference type="GO" id="GO:0003723">
    <property type="term" value="F:RNA binding"/>
    <property type="evidence" value="ECO:0007669"/>
    <property type="project" value="UniProtKB-KW"/>
</dbReference>
<dbReference type="GO" id="GO:0019074">
    <property type="term" value="P:viral RNA genome packaging"/>
    <property type="evidence" value="ECO:0007669"/>
    <property type="project" value="InterPro"/>
</dbReference>
<dbReference type="InterPro" id="IPR008609">
    <property type="entry name" value="Ebola_NP"/>
</dbReference>
<dbReference type="Pfam" id="PF05505">
    <property type="entry name" value="Ebola_NP"/>
    <property type="match status" value="1"/>
</dbReference>
<dbReference type="PIRSF" id="PIRSF003900">
    <property type="entry name" value="N_FiloV"/>
    <property type="match status" value="1"/>
</dbReference>
<sequence>MDRGTRRIWVSQNQGDTDLDYHKILTAGLTVQQGIVRQKIISVYLVDNLEAMCQLVIQAFEAGIDFQENADSFLLMLCLHHAYQGDYKLFLESNAVQYLEGHGFKFELRKKDGVNRLEELLPAATSGKNIRRTLAALPEEETTEANAGQFLSFASLFLPKLVVGEKACLEKVQRQIQVHAEQGLIQYPTAWQSVGHMMVIFRLMRTNFLIKYLLIHQGMHMVAGHDANDAVIANSVAQARFSGLLIVKTVLDHILQKTDQGVRLHPLARTAKVRNEVNAFKAALSSLAKHGEYAPFARLLNLSGVNNLEHGLYPQLSAIALGVATAHGSTLAGVNVGEQYQQLREAATEAEKQLQQYAESRELDSLGLDDQERRILMNFHQKKNEISFQQTNAMVTLRKERLAKLTEAITLASRPNLGSRQDDDNEIPFPGPISNNPDQDHLEDDPRDSRDTIIPNSAIDPEDGDFENYNGYHDDEVGTAGDLVLFDLDDHEDDNKAFELQDSSPQSQREIERERLIHPPPGNNKDDNRASDNNQQSADSEEQEGQYNRHRGPERTTANRRLSPVHEEDTPIDQGDDDPSSPPPLESDDDDASSSQQDPDYTAVAPPAPVYRSAEAHEPPHKSSNEPAETSQLNEDPDIGQSKSMQKLGETYHHLLRTQGPFEAINYYHMMKDEPVIFSTDDGKEYTYPDSLEEAYPPWLTEKERLDNENRYIYINNQQFFWPVMSPRDKFLAILQHHQ</sequence>
<organismHost>
    <name type="scientific">Homo sapiens</name>
    <name type="common">Human</name>
    <dbReference type="NCBI Taxonomy" id="9606"/>
</organismHost>
<organismHost>
    <name type="scientific">Macaca fascicularis</name>
    <name type="common">Crab-eating macaque</name>
    <name type="synonym">Cynomolgus monkey</name>
    <dbReference type="NCBI Taxonomy" id="9541"/>
</organismHost>
<organismHost>
    <name type="scientific">Pteropodinae</name>
    <dbReference type="NCBI Taxonomy" id="77225"/>
</organismHost>
<organismHost>
    <name type="scientific">Sus scrofa</name>
    <name type="common">Pig</name>
    <dbReference type="NCBI Taxonomy" id="9823"/>
</organismHost>
<gene>
    <name type="primary">NP</name>
</gene>
<protein>
    <recommendedName>
        <fullName>Nucleoprotein</fullName>
    </recommendedName>
    <alternativeName>
        <fullName>Nucleocapsid protein</fullName>
        <shortName>Protein N</shortName>
    </alternativeName>
    <alternativeName>
        <fullName evidence="4">Reston NP</fullName>
        <shortName evidence="4">rNP</shortName>
    </alternativeName>
</protein>
<keyword id="KW-0167">Capsid protein</keyword>
<keyword id="KW-0175">Coiled coil</keyword>
<keyword id="KW-1139">Helical capsid protein</keyword>
<keyword id="KW-1035">Host cytoplasm</keyword>
<keyword id="KW-0597">Phosphoprotein</keyword>
<keyword id="KW-0687">Ribonucleoprotein</keyword>
<keyword id="KW-0694">RNA-binding</keyword>
<keyword id="KW-0543">Viral nucleoprotein</keyword>
<keyword id="KW-0946">Virion</keyword>
<accession>Q91DE1</accession>
<feature type="chain" id="PRO_0000245051" description="Nucleoprotein">
    <location>
        <begin position="1"/>
        <end position="739"/>
    </location>
</feature>
<feature type="region of interest" description="Disordered" evidence="3">
    <location>
        <begin position="414"/>
        <end position="475"/>
    </location>
</feature>
<feature type="region of interest" description="Disordered" evidence="3">
    <location>
        <begin position="498"/>
        <end position="642"/>
    </location>
</feature>
<feature type="coiled-coil region" evidence="2">
    <location>
        <begin position="334"/>
        <end position="363"/>
    </location>
</feature>
<feature type="compositionally biased region" description="Acidic residues" evidence="3">
    <location>
        <begin position="570"/>
        <end position="579"/>
    </location>
</feature>
<feature type="compositionally biased region" description="Basic and acidic residues" evidence="3">
    <location>
        <begin position="614"/>
        <end position="624"/>
    </location>
</feature>
<feature type="compositionally biased region" description="Polar residues" evidence="3">
    <location>
        <begin position="625"/>
        <end position="634"/>
    </location>
</feature>
<evidence type="ECO:0000250" key="1">
    <source>
        <dbReference type="UniProtKB" id="P18272"/>
    </source>
</evidence>
<evidence type="ECO:0000255" key="2"/>
<evidence type="ECO:0000256" key="3">
    <source>
        <dbReference type="SAM" id="MobiDB-lite"/>
    </source>
</evidence>
<evidence type="ECO:0000303" key="4">
    <source>
    </source>
</evidence>
<evidence type="ECO:0000305" key="5"/>
<organism>
    <name type="scientific">Reston ebolavirus (strain Philippines-96)</name>
    <name type="common">REBOV</name>
    <name type="synonym">Reston Ebola virus</name>
    <dbReference type="NCBI Taxonomy" id="129003"/>
    <lineage>
        <taxon>Viruses</taxon>
        <taxon>Riboviria</taxon>
        <taxon>Orthornavirae</taxon>
        <taxon>Negarnaviricota</taxon>
        <taxon>Haploviricotina</taxon>
        <taxon>Monjiviricetes</taxon>
        <taxon>Mononegavirales</taxon>
        <taxon>Filoviridae</taxon>
        <taxon>Orthoebolavirus</taxon>
        <taxon>Orthoebolavirus restonense</taxon>
        <taxon>Reston ebolavirus</taxon>
    </lineage>
</organism>
<reference key="1">
    <citation type="journal article" date="2001" name="Arch. Virol.">
        <title>Genome structure of Ebola virus subtype Reston: differences among Ebola subtypes.</title>
        <authorList>
            <person name="Ikegami T."/>
            <person name="Calaor A.B."/>
            <person name="Miranda M.E."/>
            <person name="Niikura M."/>
            <person name="Saijo M."/>
            <person name="Kurane I."/>
            <person name="Yoshikawa Y."/>
            <person name="Morikawa S."/>
        </authorList>
    </citation>
    <scope>NUCLEOTIDE SEQUENCE [GENOMIC RNA]</scope>
</reference>
<reference key="2">
    <citation type="journal article" date="2003" name="Epidemiol. Infect.">
        <title>Immunoglobulin G enzyme-linked immunosorbent assay using truncated nucleoproteins of Reston Ebola virus.</title>
        <authorList>
            <person name="Ikegami T."/>
            <person name="Saijo M."/>
            <person name="Niikura M."/>
            <person name="Miranda M.E."/>
            <person name="Calaor A.B."/>
            <person name="Hernandez M."/>
            <person name="Manalo D.L."/>
            <person name="Kurane I."/>
            <person name="Yoshikawa Y."/>
            <person name="Morikawa S."/>
        </authorList>
    </citation>
    <scope>NOMENCLATURE</scope>
</reference>
<name>NCAP_EBORE</name>
<proteinExistence type="inferred from homology"/>